<gene>
    <name evidence="1" type="primary">rpo3</name>
    <name evidence="1" type="synonym">rpoD</name>
    <name type="ordered locus">STK_20670</name>
</gene>
<feature type="chain" id="PRO_0000132766" description="DNA-directed RNA polymerase subunit Rpo3">
    <location>
        <begin position="1"/>
        <end position="264"/>
    </location>
</feature>
<feature type="binding site" evidence="1">
    <location>
        <position position="204"/>
    </location>
    <ligand>
        <name>[3Fe-4S] cluster</name>
        <dbReference type="ChEBI" id="CHEBI:21137"/>
    </ligand>
</feature>
<feature type="binding site" evidence="1">
    <location>
        <position position="207"/>
    </location>
    <ligand>
        <name>[3Fe-4S] cluster</name>
        <dbReference type="ChEBI" id="CHEBI:21137"/>
    </ligand>
</feature>
<feature type="binding site" evidence="1">
    <location>
        <position position="210"/>
    </location>
    <ligand>
        <name>[3Fe-4S] cluster</name>
        <dbReference type="ChEBI" id="CHEBI:21137"/>
    </ligand>
</feature>
<organism>
    <name type="scientific">Sulfurisphaera tokodaii (strain DSM 16993 / JCM 10545 / NBRC 100140 / 7)</name>
    <name type="common">Sulfolobus tokodaii</name>
    <dbReference type="NCBI Taxonomy" id="273063"/>
    <lineage>
        <taxon>Archaea</taxon>
        <taxon>Thermoproteota</taxon>
        <taxon>Thermoprotei</taxon>
        <taxon>Sulfolobales</taxon>
        <taxon>Sulfolobaceae</taxon>
        <taxon>Sulfurisphaera</taxon>
    </lineage>
</organism>
<name>RPO3_SULTO</name>
<evidence type="ECO:0000255" key="1">
    <source>
        <dbReference type="HAMAP-Rule" id="MF_00320"/>
    </source>
</evidence>
<evidence type="ECO:0000305" key="2"/>
<proteinExistence type="inferred from homology"/>
<accession>Q96YW0</accession>
<dbReference type="EC" id="2.7.7.6" evidence="1"/>
<dbReference type="EMBL" id="BA000023">
    <property type="protein sequence ID" value="BAB67166.1"/>
    <property type="molecule type" value="Genomic_DNA"/>
</dbReference>
<dbReference type="RefSeq" id="WP_010980142.1">
    <property type="nucleotide sequence ID" value="NC_003106.2"/>
</dbReference>
<dbReference type="SMR" id="Q96YW0"/>
<dbReference type="STRING" id="273063.STK_20670"/>
<dbReference type="GeneID" id="1460132"/>
<dbReference type="KEGG" id="sto:STK_20670"/>
<dbReference type="PATRIC" id="fig|273063.9.peg.2355"/>
<dbReference type="eggNOG" id="arCOG04241">
    <property type="taxonomic scope" value="Archaea"/>
</dbReference>
<dbReference type="OrthoDB" id="84933at2157"/>
<dbReference type="Proteomes" id="UP000001015">
    <property type="component" value="Chromosome"/>
</dbReference>
<dbReference type="GO" id="GO:0005737">
    <property type="term" value="C:cytoplasm"/>
    <property type="evidence" value="ECO:0007669"/>
    <property type="project" value="UniProtKB-SubCell"/>
</dbReference>
<dbReference type="GO" id="GO:0000428">
    <property type="term" value="C:DNA-directed RNA polymerase complex"/>
    <property type="evidence" value="ECO:0007669"/>
    <property type="project" value="UniProtKB-KW"/>
</dbReference>
<dbReference type="GO" id="GO:0051538">
    <property type="term" value="F:3 iron, 4 sulfur cluster binding"/>
    <property type="evidence" value="ECO:0007669"/>
    <property type="project" value="UniProtKB-KW"/>
</dbReference>
<dbReference type="GO" id="GO:0003677">
    <property type="term" value="F:DNA binding"/>
    <property type="evidence" value="ECO:0007669"/>
    <property type="project" value="UniProtKB-UniRule"/>
</dbReference>
<dbReference type="GO" id="GO:0003899">
    <property type="term" value="F:DNA-directed RNA polymerase activity"/>
    <property type="evidence" value="ECO:0007669"/>
    <property type="project" value="UniProtKB-UniRule"/>
</dbReference>
<dbReference type="GO" id="GO:0046872">
    <property type="term" value="F:metal ion binding"/>
    <property type="evidence" value="ECO:0007669"/>
    <property type="project" value="UniProtKB-KW"/>
</dbReference>
<dbReference type="GO" id="GO:0046983">
    <property type="term" value="F:protein dimerization activity"/>
    <property type="evidence" value="ECO:0007669"/>
    <property type="project" value="InterPro"/>
</dbReference>
<dbReference type="GO" id="GO:0006351">
    <property type="term" value="P:DNA-templated transcription"/>
    <property type="evidence" value="ECO:0007669"/>
    <property type="project" value="UniProtKB-UniRule"/>
</dbReference>
<dbReference type="CDD" id="cd07030">
    <property type="entry name" value="RNAP_D"/>
    <property type="match status" value="1"/>
</dbReference>
<dbReference type="Gene3D" id="3.30.70.20">
    <property type="match status" value="1"/>
</dbReference>
<dbReference type="Gene3D" id="2.170.120.12">
    <property type="entry name" value="DNA-directed RNA polymerase, insert domain"/>
    <property type="match status" value="1"/>
</dbReference>
<dbReference type="Gene3D" id="3.30.1360.10">
    <property type="entry name" value="RNA polymerase, RBP11-like subunit"/>
    <property type="match status" value="1"/>
</dbReference>
<dbReference type="HAMAP" id="MF_00320">
    <property type="entry name" value="RNApol_arch_Rpo3"/>
    <property type="match status" value="1"/>
</dbReference>
<dbReference type="InterPro" id="IPR017900">
    <property type="entry name" value="4Fe4S_Fe_S_CS"/>
</dbReference>
<dbReference type="InterPro" id="IPR001514">
    <property type="entry name" value="DNA-dir_RNA_pol_30-40kDasu_CS"/>
</dbReference>
<dbReference type="InterPro" id="IPR011262">
    <property type="entry name" value="DNA-dir_RNA_pol_insert"/>
</dbReference>
<dbReference type="InterPro" id="IPR011263">
    <property type="entry name" value="DNA-dir_RNA_pol_RpoA/D/Rpb3"/>
</dbReference>
<dbReference type="InterPro" id="IPR036603">
    <property type="entry name" value="RBP11-like"/>
</dbReference>
<dbReference type="InterPro" id="IPR022842">
    <property type="entry name" value="RNAP_Rpo3/Rpb3/RPAC1"/>
</dbReference>
<dbReference type="InterPro" id="IPR036643">
    <property type="entry name" value="RNApol_insert_sf"/>
</dbReference>
<dbReference type="InterPro" id="IPR050518">
    <property type="entry name" value="Rpo3/RPB3_RNA_Pol_subunit"/>
</dbReference>
<dbReference type="NCBIfam" id="NF001988">
    <property type="entry name" value="PRK00783.1"/>
    <property type="match status" value="1"/>
</dbReference>
<dbReference type="PANTHER" id="PTHR11800">
    <property type="entry name" value="DNA-DIRECTED RNA POLYMERASE"/>
    <property type="match status" value="1"/>
</dbReference>
<dbReference type="PANTHER" id="PTHR11800:SF2">
    <property type="entry name" value="DNA-DIRECTED RNA POLYMERASE II SUBUNIT RPB3"/>
    <property type="match status" value="1"/>
</dbReference>
<dbReference type="Pfam" id="PF01000">
    <property type="entry name" value="RNA_pol_A_bac"/>
    <property type="match status" value="1"/>
</dbReference>
<dbReference type="Pfam" id="PF01193">
    <property type="entry name" value="RNA_pol_L"/>
    <property type="match status" value="1"/>
</dbReference>
<dbReference type="SMART" id="SM00662">
    <property type="entry name" value="RPOLD"/>
    <property type="match status" value="1"/>
</dbReference>
<dbReference type="SUPFAM" id="SSF56553">
    <property type="entry name" value="Insert subdomain of RNA polymerase alpha subunit"/>
    <property type="match status" value="1"/>
</dbReference>
<dbReference type="SUPFAM" id="SSF55257">
    <property type="entry name" value="RBP11-like subunits of RNA polymerase"/>
    <property type="match status" value="1"/>
</dbReference>
<dbReference type="PROSITE" id="PS00198">
    <property type="entry name" value="4FE4S_FER_1"/>
    <property type="match status" value="1"/>
</dbReference>
<dbReference type="PROSITE" id="PS00446">
    <property type="entry name" value="RNA_POL_D_30KD"/>
    <property type="match status" value="1"/>
</dbReference>
<comment type="function">
    <text evidence="1">DNA-dependent RNA polymerase (RNAP) catalyzes the transcription of DNA into RNA using the four ribonucleoside triphosphates as substrates.</text>
</comment>
<comment type="catalytic activity">
    <reaction evidence="1">
        <text>RNA(n) + a ribonucleoside 5'-triphosphate = RNA(n+1) + diphosphate</text>
        <dbReference type="Rhea" id="RHEA:21248"/>
        <dbReference type="Rhea" id="RHEA-COMP:14527"/>
        <dbReference type="Rhea" id="RHEA-COMP:17342"/>
        <dbReference type="ChEBI" id="CHEBI:33019"/>
        <dbReference type="ChEBI" id="CHEBI:61557"/>
        <dbReference type="ChEBI" id="CHEBI:140395"/>
        <dbReference type="EC" id="2.7.7.6"/>
    </reaction>
</comment>
<comment type="cofactor">
    <cofactor evidence="1">
        <name>[3Fe-4S] cluster</name>
        <dbReference type="ChEBI" id="CHEBI:21137"/>
    </cofactor>
    <text evidence="1">Binds 1 [3Fe-4S] cluster.</text>
</comment>
<comment type="subunit">
    <text evidence="1">Part of the RNA polymerase complex.</text>
</comment>
<comment type="subcellular location">
    <subcellularLocation>
        <location evidence="1">Cytoplasm</location>
    </subcellularLocation>
</comment>
<comment type="similarity">
    <text evidence="1">Belongs to the archaeal Rpo3/eukaryotic RPB3 RNA polymerase subunit family.</text>
</comment>
<comment type="caution">
    <text evidence="2">X-ray crystallography in other archaea shows this protein binds a 3Fe-4S cluster, although a 4Fe-4S cluster has been suggested to be present in this protein.</text>
</comment>
<sequence length="264" mass="29620">MPISLLSKENNSLKLIVGNYPLELVNSIRRASILYVPVMAVDEVYFIENNSPLYDEILAHRLAMIPFSSDEALDHYRPPEECAECKENCDGCYARVYLDVGANEGETVMVYSRDLKTDDPAIVPISGNIPIVLLGPKQKVTLEARLRLGYGKEHIKFSPVSIAVVRYYPHVEVKGNCEKAFEVCPEGVFGMENGKLFVKNEVACTLCEECIKYCENNIFISAVENKYILEIESVGSLKPERILIEAGKSLLRKLNQLKKLVEGL</sequence>
<protein>
    <recommendedName>
        <fullName evidence="1">DNA-directed RNA polymerase subunit Rpo3</fullName>
        <ecNumber evidence="1">2.7.7.6</ecNumber>
    </recommendedName>
    <alternativeName>
        <fullName evidence="1">DNA-directed RNA polymerase subunit D</fullName>
    </alternativeName>
</protein>
<keyword id="KW-0003">3Fe-4S</keyword>
<keyword id="KW-0963">Cytoplasm</keyword>
<keyword id="KW-0240">DNA-directed RNA polymerase</keyword>
<keyword id="KW-0408">Iron</keyword>
<keyword id="KW-0411">Iron-sulfur</keyword>
<keyword id="KW-0479">Metal-binding</keyword>
<keyword id="KW-0548">Nucleotidyltransferase</keyword>
<keyword id="KW-1185">Reference proteome</keyword>
<keyword id="KW-0804">Transcription</keyword>
<keyword id="KW-0808">Transferase</keyword>
<reference key="1">
    <citation type="journal article" date="2001" name="DNA Res.">
        <title>Complete genome sequence of an aerobic thermoacidophilic Crenarchaeon, Sulfolobus tokodaii strain7.</title>
        <authorList>
            <person name="Kawarabayasi Y."/>
            <person name="Hino Y."/>
            <person name="Horikawa H."/>
            <person name="Jin-no K."/>
            <person name="Takahashi M."/>
            <person name="Sekine M."/>
            <person name="Baba S."/>
            <person name="Ankai A."/>
            <person name="Kosugi H."/>
            <person name="Hosoyama A."/>
            <person name="Fukui S."/>
            <person name="Nagai Y."/>
            <person name="Nishijima K."/>
            <person name="Otsuka R."/>
            <person name="Nakazawa H."/>
            <person name="Takamiya M."/>
            <person name="Kato Y."/>
            <person name="Yoshizawa T."/>
            <person name="Tanaka T."/>
            <person name="Kudoh Y."/>
            <person name="Yamazaki J."/>
            <person name="Kushida N."/>
            <person name="Oguchi A."/>
            <person name="Aoki K."/>
            <person name="Masuda S."/>
            <person name="Yanagii M."/>
            <person name="Nishimura M."/>
            <person name="Yamagishi A."/>
            <person name="Oshima T."/>
            <person name="Kikuchi H."/>
        </authorList>
    </citation>
    <scope>NUCLEOTIDE SEQUENCE [LARGE SCALE GENOMIC DNA]</scope>
    <source>
        <strain>DSM 16993 / JCM 10545 / NBRC 100140 / 7</strain>
    </source>
</reference>